<evidence type="ECO:0000255" key="1">
    <source>
        <dbReference type="HAMAP-Rule" id="MF_01684"/>
    </source>
</evidence>
<proteinExistence type="inferred from homology"/>
<feature type="chain" id="PRO_0000359357" description="5'-methylthioadenosine/S-adenosylhomocysteine nucleosidase">
    <location>
        <begin position="1"/>
        <end position="232"/>
    </location>
</feature>
<feature type="active site" description="Proton acceptor" evidence="1">
    <location>
        <position position="12"/>
    </location>
</feature>
<feature type="active site" description="Proton donor" evidence="1">
    <location>
        <position position="197"/>
    </location>
</feature>
<feature type="binding site" evidence="1">
    <location>
        <position position="78"/>
    </location>
    <ligand>
        <name>substrate</name>
    </ligand>
</feature>
<feature type="binding site" evidence="1">
    <location>
        <position position="152"/>
    </location>
    <ligand>
        <name>substrate</name>
    </ligand>
</feature>
<feature type="binding site" evidence="1">
    <location>
        <begin position="173"/>
        <end position="174"/>
    </location>
    <ligand>
        <name>substrate</name>
    </ligand>
</feature>
<name>MTNN_SHIBS</name>
<keyword id="KW-0028">Amino-acid biosynthesis</keyword>
<keyword id="KW-0378">Hydrolase</keyword>
<keyword id="KW-0486">Methionine biosynthesis</keyword>
<dbReference type="EC" id="3.2.2.9" evidence="1"/>
<dbReference type="EMBL" id="CP000036">
    <property type="protein sequence ID" value="ABB64878.1"/>
    <property type="molecule type" value="Genomic_DNA"/>
</dbReference>
<dbReference type="RefSeq" id="WP_000689854.1">
    <property type="nucleotide sequence ID" value="NC_007613.1"/>
</dbReference>
<dbReference type="SMR" id="Q325Y0"/>
<dbReference type="KEGG" id="sbo:SBO_0148"/>
<dbReference type="HOGENOM" id="CLU_031248_2_2_6"/>
<dbReference type="UniPathway" id="UPA00904">
    <property type="reaction ID" value="UER00871"/>
</dbReference>
<dbReference type="Proteomes" id="UP000007067">
    <property type="component" value="Chromosome"/>
</dbReference>
<dbReference type="GO" id="GO:0005829">
    <property type="term" value="C:cytosol"/>
    <property type="evidence" value="ECO:0007669"/>
    <property type="project" value="TreeGrafter"/>
</dbReference>
<dbReference type="GO" id="GO:0008782">
    <property type="term" value="F:adenosylhomocysteine nucleosidase activity"/>
    <property type="evidence" value="ECO:0007669"/>
    <property type="project" value="UniProtKB-UniRule"/>
</dbReference>
<dbReference type="GO" id="GO:0008930">
    <property type="term" value="F:methylthioadenosine nucleosidase activity"/>
    <property type="evidence" value="ECO:0007669"/>
    <property type="project" value="UniProtKB-UniRule"/>
</dbReference>
<dbReference type="GO" id="GO:0019509">
    <property type="term" value="P:L-methionine salvage from methylthioadenosine"/>
    <property type="evidence" value="ECO:0007669"/>
    <property type="project" value="UniProtKB-UniRule"/>
</dbReference>
<dbReference type="GO" id="GO:0019284">
    <property type="term" value="P:L-methionine salvage from S-adenosylmethionine"/>
    <property type="evidence" value="ECO:0007669"/>
    <property type="project" value="TreeGrafter"/>
</dbReference>
<dbReference type="GO" id="GO:0046124">
    <property type="term" value="P:purine deoxyribonucleoside catabolic process"/>
    <property type="evidence" value="ECO:0007669"/>
    <property type="project" value="UniProtKB-UniRule"/>
</dbReference>
<dbReference type="CDD" id="cd09008">
    <property type="entry name" value="MTAN"/>
    <property type="match status" value="1"/>
</dbReference>
<dbReference type="FunFam" id="3.40.50.1580:FF:000001">
    <property type="entry name" value="MTA/SAH nucleosidase family protein"/>
    <property type="match status" value="1"/>
</dbReference>
<dbReference type="Gene3D" id="3.40.50.1580">
    <property type="entry name" value="Nucleoside phosphorylase domain"/>
    <property type="match status" value="1"/>
</dbReference>
<dbReference type="HAMAP" id="MF_01684">
    <property type="entry name" value="Salvage_MtnN"/>
    <property type="match status" value="1"/>
</dbReference>
<dbReference type="InterPro" id="IPR010049">
    <property type="entry name" value="MTA_SAH_Nsdase"/>
</dbReference>
<dbReference type="InterPro" id="IPR000845">
    <property type="entry name" value="Nucleoside_phosphorylase_d"/>
</dbReference>
<dbReference type="InterPro" id="IPR035994">
    <property type="entry name" value="Nucleoside_phosphorylase_sf"/>
</dbReference>
<dbReference type="NCBIfam" id="TIGR01704">
    <property type="entry name" value="MTA_SAH-Nsdase"/>
    <property type="match status" value="1"/>
</dbReference>
<dbReference type="NCBIfam" id="NF004079">
    <property type="entry name" value="PRK05584.1"/>
    <property type="match status" value="1"/>
</dbReference>
<dbReference type="PANTHER" id="PTHR46832">
    <property type="entry name" value="5'-METHYLTHIOADENOSINE/S-ADENOSYLHOMOCYSTEINE NUCLEOSIDASE"/>
    <property type="match status" value="1"/>
</dbReference>
<dbReference type="PANTHER" id="PTHR46832:SF1">
    <property type="entry name" value="5'-METHYLTHIOADENOSINE_S-ADENOSYLHOMOCYSTEINE NUCLEOSIDASE"/>
    <property type="match status" value="1"/>
</dbReference>
<dbReference type="Pfam" id="PF01048">
    <property type="entry name" value="PNP_UDP_1"/>
    <property type="match status" value="1"/>
</dbReference>
<dbReference type="SUPFAM" id="SSF53167">
    <property type="entry name" value="Purine and uridine phosphorylases"/>
    <property type="match status" value="1"/>
</dbReference>
<gene>
    <name evidence="1" type="primary">mtnN</name>
    <name type="ordered locus">SBO_0148</name>
</gene>
<comment type="function">
    <text evidence="1">Catalyzes the irreversible cleavage of the glycosidic bond in both 5'-methylthioadenosine (MTA) and S-adenosylhomocysteine (SAH/AdoHcy) to adenine and the corresponding thioribose, 5'-methylthioribose and S-ribosylhomocysteine, respectively. Also cleaves 5'-deoxyadenosine, a toxic by-product of radical S-adenosylmethionine (SAM) enzymes, into 5-deoxyribose and adenine. Thus, is required for in vivo function of the radical SAM enzymes biotin synthase and lipoic acid synthase, that are inhibited by 5'-deoxyadenosine accumulation.</text>
</comment>
<comment type="catalytic activity">
    <reaction evidence="1">
        <text>S-adenosyl-L-homocysteine + H2O = S-(5-deoxy-D-ribos-5-yl)-L-homocysteine + adenine</text>
        <dbReference type="Rhea" id="RHEA:17805"/>
        <dbReference type="ChEBI" id="CHEBI:15377"/>
        <dbReference type="ChEBI" id="CHEBI:16708"/>
        <dbReference type="ChEBI" id="CHEBI:57856"/>
        <dbReference type="ChEBI" id="CHEBI:58195"/>
        <dbReference type="EC" id="3.2.2.9"/>
    </reaction>
</comment>
<comment type="catalytic activity">
    <reaction evidence="1">
        <text>S-methyl-5'-thioadenosine + H2O = 5-(methylsulfanyl)-D-ribose + adenine</text>
        <dbReference type="Rhea" id="RHEA:13617"/>
        <dbReference type="ChEBI" id="CHEBI:15377"/>
        <dbReference type="ChEBI" id="CHEBI:16708"/>
        <dbReference type="ChEBI" id="CHEBI:17509"/>
        <dbReference type="ChEBI" id="CHEBI:78440"/>
        <dbReference type="EC" id="3.2.2.9"/>
    </reaction>
</comment>
<comment type="catalytic activity">
    <reaction evidence="1">
        <text>5'-deoxyadenosine + H2O = 5-deoxy-D-ribose + adenine</text>
        <dbReference type="Rhea" id="RHEA:29859"/>
        <dbReference type="ChEBI" id="CHEBI:15377"/>
        <dbReference type="ChEBI" id="CHEBI:16708"/>
        <dbReference type="ChEBI" id="CHEBI:17319"/>
        <dbReference type="ChEBI" id="CHEBI:149540"/>
        <dbReference type="EC" id="3.2.2.9"/>
    </reaction>
    <physiologicalReaction direction="left-to-right" evidence="1">
        <dbReference type="Rhea" id="RHEA:29860"/>
    </physiologicalReaction>
</comment>
<comment type="pathway">
    <text evidence="1">Amino-acid biosynthesis; L-methionine biosynthesis via salvage pathway; S-methyl-5-thio-alpha-D-ribose 1-phosphate from S-methyl-5'-thioadenosine (hydrolase route): step 1/2.</text>
</comment>
<comment type="subunit">
    <text evidence="1">Homodimer.</text>
</comment>
<comment type="similarity">
    <text evidence="1">Belongs to the PNP/UDP phosphorylase family. MtnN subfamily.</text>
</comment>
<accession>Q325Y0</accession>
<reference key="1">
    <citation type="journal article" date="2005" name="Nucleic Acids Res.">
        <title>Genome dynamics and diversity of Shigella species, the etiologic agents of bacillary dysentery.</title>
        <authorList>
            <person name="Yang F."/>
            <person name="Yang J."/>
            <person name="Zhang X."/>
            <person name="Chen L."/>
            <person name="Jiang Y."/>
            <person name="Yan Y."/>
            <person name="Tang X."/>
            <person name="Wang J."/>
            <person name="Xiong Z."/>
            <person name="Dong J."/>
            <person name="Xue Y."/>
            <person name="Zhu Y."/>
            <person name="Xu X."/>
            <person name="Sun L."/>
            <person name="Chen S."/>
            <person name="Nie H."/>
            <person name="Peng J."/>
            <person name="Xu J."/>
            <person name="Wang Y."/>
            <person name="Yuan Z."/>
            <person name="Wen Y."/>
            <person name="Yao Z."/>
            <person name="Shen Y."/>
            <person name="Qiang B."/>
            <person name="Hou Y."/>
            <person name="Yu J."/>
            <person name="Jin Q."/>
        </authorList>
    </citation>
    <scope>NUCLEOTIDE SEQUENCE [LARGE SCALE GENOMIC DNA]</scope>
    <source>
        <strain>Sb227</strain>
    </source>
</reference>
<sequence length="232" mass="24308">MKIGIIGAMEEEVTLLRDKIENRQTISLGGCEIYTGQLNGTEVALLKSGIGKVAAALGATLLLEHGKPDVIINTGSAGGLAPTLKVGDIVVSDEARYHDADVTAFGYEYGQLPGCPAGFKADDKLIAAAEACIAELNLNAVRGLIVSGDAFINGSVGLAKIRHNFPQAIAVEMEATAIAHVCHNFNVPFVVVRAISDVADQQSHLSFDEFLAVAAKQSSLMVESLVQKLAHG</sequence>
<protein>
    <recommendedName>
        <fullName evidence="1">5'-methylthioadenosine/S-adenosylhomocysteine nucleosidase</fullName>
        <shortName evidence="1">MTA/SAH nucleosidase</shortName>
        <shortName evidence="1">MTAN</shortName>
        <ecNumber evidence="1">3.2.2.9</ecNumber>
    </recommendedName>
    <alternativeName>
        <fullName evidence="1">5'-deoxyadenosine nucleosidase</fullName>
        <shortName evidence="1">DOA nucleosidase</shortName>
        <shortName evidence="1">dAdo nucleosidase</shortName>
    </alternativeName>
    <alternativeName>
        <fullName evidence="1">5'-methylthioadenosine nucleosidase</fullName>
        <shortName evidence="1">MTA nucleosidase</shortName>
    </alternativeName>
    <alternativeName>
        <fullName evidence="1">S-adenosylhomocysteine nucleosidase</fullName>
        <shortName evidence="1">AdoHcy nucleosidase</shortName>
        <shortName evidence="1">SAH nucleosidase</shortName>
        <shortName evidence="1">SRH nucleosidase</shortName>
    </alternativeName>
</protein>
<organism>
    <name type="scientific">Shigella boydii serotype 4 (strain Sb227)</name>
    <dbReference type="NCBI Taxonomy" id="300268"/>
    <lineage>
        <taxon>Bacteria</taxon>
        <taxon>Pseudomonadati</taxon>
        <taxon>Pseudomonadota</taxon>
        <taxon>Gammaproteobacteria</taxon>
        <taxon>Enterobacterales</taxon>
        <taxon>Enterobacteriaceae</taxon>
        <taxon>Shigella</taxon>
    </lineage>
</organism>